<comment type="function">
    <text evidence="1 6">ATP-dependent serine protease that mediates the selective degradation of misfolded and unassembled polypeptides in the peroxisomal matrix. Necessary for type 2 peroxisome targeting signal (PTS2)-containing protein processing and facilitates peroxisome matrix protein import (By similarity). May indirectly regulate peroxisomal fatty acid beta-oxidation through degradation of the self-processed forms of TYSND1.</text>
</comment>
<comment type="catalytic activity">
    <reaction evidence="1">
        <text>Hydrolysis of proteins in presence of ATP.</text>
        <dbReference type="EC" id="3.4.21.53"/>
    </reaction>
</comment>
<comment type="subunit">
    <text evidence="1 5 6">Interacts with PEX5 (By similarity) (PubMed:22002062). Interacts with TYSND1 (By similarity) (PubMed:22002062). May interact with enzymes involved in beta-oxidation of fatty acids, including ACOX1/AOX (PubMed:18281296).</text>
</comment>
<comment type="interaction">
    <interactant intactId="EBI-2513996">
        <id>Q86WA8</id>
    </interactant>
    <interactant intactId="EBI-10305303">
        <id>Q9H1X1</id>
        <label>RSPH9</label>
    </interactant>
    <organismsDiffer>false</organismsDiffer>
    <experiments>4</experiments>
</comment>
<comment type="interaction">
    <interactant intactId="EBI-2513996">
        <id>Q86WA8</id>
    </interactant>
    <interactant intactId="EBI-6872807">
        <id>Q8N0S2</id>
        <label>SYCE1</label>
    </interactant>
    <organismsDiffer>false</organismsDiffer>
    <experiments>3</experiments>
</comment>
<comment type="subcellular location">
    <subcellularLocation>
        <location evidence="1 4 5 6">Peroxisome matrix</location>
    </subcellularLocation>
</comment>
<comment type="alternative products">
    <event type="alternative splicing"/>
    <isoform>
        <id>Q86WA8-1</id>
        <name>1</name>
        <sequence type="displayed"/>
    </isoform>
    <isoform>
        <id>Q86WA8-2</id>
        <name>2</name>
        <sequence type="described" ref="VSP_056190"/>
    </isoform>
</comment>
<comment type="tissue specificity">
    <text evidence="5">Widely expressed, with high levels in the liver, kidney and pancreas.</text>
</comment>
<comment type="similarity">
    <text evidence="1">Belongs to the peptidase S16 family.</text>
</comment>
<comment type="sequence caution" evidence="9">
    <conflict type="erroneous initiation">
        <sequence resource="EMBL-CDS" id="BAB55278"/>
    </conflict>
    <text>Truncated N-terminus.</text>
</comment>
<gene>
    <name evidence="1" type="primary">LONP2</name>
    <name type="synonym">LONP</name>
</gene>
<keyword id="KW-0007">Acetylation</keyword>
<keyword id="KW-0025">Alternative splicing</keyword>
<keyword id="KW-0067">ATP-binding</keyword>
<keyword id="KW-0378">Hydrolase</keyword>
<keyword id="KW-0547">Nucleotide-binding</keyword>
<keyword id="KW-0576">Peroxisome</keyword>
<keyword id="KW-0645">Protease</keyword>
<keyword id="KW-1267">Proteomics identification</keyword>
<keyword id="KW-1185">Reference proteome</keyword>
<keyword id="KW-0720">Serine protease</keyword>
<reference key="1">
    <citation type="submission" date="2003-02" db="EMBL/GenBank/DDBJ databases">
        <title>A mammalian peroxisomal lon protease: cloning and characterization.</title>
        <authorList>
            <person name="De Walque S."/>
            <person name="Van Veldhoven P.P."/>
        </authorList>
    </citation>
    <scope>NUCLEOTIDE SEQUENCE [MRNA] (ISOFORM 1)</scope>
</reference>
<reference key="2">
    <citation type="journal article" date="2004" name="Nat. Genet.">
        <title>Complete sequencing and characterization of 21,243 full-length human cDNAs.</title>
        <authorList>
            <person name="Ota T."/>
            <person name="Suzuki Y."/>
            <person name="Nishikawa T."/>
            <person name="Otsuki T."/>
            <person name="Sugiyama T."/>
            <person name="Irie R."/>
            <person name="Wakamatsu A."/>
            <person name="Hayashi K."/>
            <person name="Sato H."/>
            <person name="Nagai K."/>
            <person name="Kimura K."/>
            <person name="Makita H."/>
            <person name="Sekine M."/>
            <person name="Obayashi M."/>
            <person name="Nishi T."/>
            <person name="Shibahara T."/>
            <person name="Tanaka T."/>
            <person name="Ishii S."/>
            <person name="Yamamoto J."/>
            <person name="Saito K."/>
            <person name="Kawai Y."/>
            <person name="Isono Y."/>
            <person name="Nakamura Y."/>
            <person name="Nagahari K."/>
            <person name="Murakami K."/>
            <person name="Yasuda T."/>
            <person name="Iwayanagi T."/>
            <person name="Wagatsuma M."/>
            <person name="Shiratori A."/>
            <person name="Sudo H."/>
            <person name="Hosoiri T."/>
            <person name="Kaku Y."/>
            <person name="Kodaira H."/>
            <person name="Kondo H."/>
            <person name="Sugawara M."/>
            <person name="Takahashi M."/>
            <person name="Kanda K."/>
            <person name="Yokoi T."/>
            <person name="Furuya T."/>
            <person name="Kikkawa E."/>
            <person name="Omura Y."/>
            <person name="Abe K."/>
            <person name="Kamihara K."/>
            <person name="Katsuta N."/>
            <person name="Sato K."/>
            <person name="Tanikawa M."/>
            <person name="Yamazaki M."/>
            <person name="Ninomiya K."/>
            <person name="Ishibashi T."/>
            <person name="Yamashita H."/>
            <person name="Murakawa K."/>
            <person name="Fujimori K."/>
            <person name="Tanai H."/>
            <person name="Kimata M."/>
            <person name="Watanabe M."/>
            <person name="Hiraoka S."/>
            <person name="Chiba Y."/>
            <person name="Ishida S."/>
            <person name="Ono Y."/>
            <person name="Takiguchi S."/>
            <person name="Watanabe S."/>
            <person name="Yosida M."/>
            <person name="Hotuta T."/>
            <person name="Kusano J."/>
            <person name="Kanehori K."/>
            <person name="Takahashi-Fujii A."/>
            <person name="Hara H."/>
            <person name="Tanase T.-O."/>
            <person name="Nomura Y."/>
            <person name="Togiya S."/>
            <person name="Komai F."/>
            <person name="Hara R."/>
            <person name="Takeuchi K."/>
            <person name="Arita M."/>
            <person name="Imose N."/>
            <person name="Musashino K."/>
            <person name="Yuuki H."/>
            <person name="Oshima A."/>
            <person name="Sasaki N."/>
            <person name="Aotsuka S."/>
            <person name="Yoshikawa Y."/>
            <person name="Matsunawa H."/>
            <person name="Ichihara T."/>
            <person name="Shiohata N."/>
            <person name="Sano S."/>
            <person name="Moriya S."/>
            <person name="Momiyama H."/>
            <person name="Satoh N."/>
            <person name="Takami S."/>
            <person name="Terashima Y."/>
            <person name="Suzuki O."/>
            <person name="Nakagawa S."/>
            <person name="Senoh A."/>
            <person name="Mizoguchi H."/>
            <person name="Goto Y."/>
            <person name="Shimizu F."/>
            <person name="Wakebe H."/>
            <person name="Hishigaki H."/>
            <person name="Watanabe T."/>
            <person name="Sugiyama A."/>
            <person name="Takemoto M."/>
            <person name="Kawakami B."/>
            <person name="Yamazaki M."/>
            <person name="Watanabe K."/>
            <person name="Kumagai A."/>
            <person name="Itakura S."/>
            <person name="Fukuzumi Y."/>
            <person name="Fujimori Y."/>
            <person name="Komiyama M."/>
            <person name="Tashiro H."/>
            <person name="Tanigami A."/>
            <person name="Fujiwara T."/>
            <person name="Ono T."/>
            <person name="Yamada K."/>
            <person name="Fujii Y."/>
            <person name="Ozaki K."/>
            <person name="Hirao M."/>
            <person name="Ohmori Y."/>
            <person name="Kawabata A."/>
            <person name="Hikiji T."/>
            <person name="Kobatake N."/>
            <person name="Inagaki H."/>
            <person name="Ikema Y."/>
            <person name="Okamoto S."/>
            <person name="Okitani R."/>
            <person name="Kawakami T."/>
            <person name="Noguchi S."/>
            <person name="Itoh T."/>
            <person name="Shigeta K."/>
            <person name="Senba T."/>
            <person name="Matsumura K."/>
            <person name="Nakajima Y."/>
            <person name="Mizuno T."/>
            <person name="Morinaga M."/>
            <person name="Sasaki M."/>
            <person name="Togashi T."/>
            <person name="Oyama M."/>
            <person name="Hata H."/>
            <person name="Watanabe M."/>
            <person name="Komatsu T."/>
            <person name="Mizushima-Sugano J."/>
            <person name="Satoh T."/>
            <person name="Shirai Y."/>
            <person name="Takahashi Y."/>
            <person name="Nakagawa K."/>
            <person name="Okumura K."/>
            <person name="Nagase T."/>
            <person name="Nomura N."/>
            <person name="Kikuchi H."/>
            <person name="Masuho Y."/>
            <person name="Yamashita R."/>
            <person name="Nakai K."/>
            <person name="Yada T."/>
            <person name="Nakamura Y."/>
            <person name="Ohara O."/>
            <person name="Isogai T."/>
            <person name="Sugano S."/>
        </authorList>
    </citation>
    <scope>NUCLEOTIDE SEQUENCE [LARGE SCALE MRNA] (ISOFORM 1)</scope>
    <source>
        <tissue>Teratocarcinoma</tissue>
    </source>
</reference>
<reference key="3">
    <citation type="journal article" date="2004" name="Nature">
        <title>The sequence and analysis of duplication-rich human chromosome 16.</title>
        <authorList>
            <person name="Martin J."/>
            <person name="Han C."/>
            <person name="Gordon L.A."/>
            <person name="Terry A."/>
            <person name="Prabhakar S."/>
            <person name="She X."/>
            <person name="Xie G."/>
            <person name="Hellsten U."/>
            <person name="Chan Y.M."/>
            <person name="Altherr M."/>
            <person name="Couronne O."/>
            <person name="Aerts A."/>
            <person name="Bajorek E."/>
            <person name="Black S."/>
            <person name="Blumer H."/>
            <person name="Branscomb E."/>
            <person name="Brown N.C."/>
            <person name="Bruno W.J."/>
            <person name="Buckingham J.M."/>
            <person name="Callen D.F."/>
            <person name="Campbell C.S."/>
            <person name="Campbell M.L."/>
            <person name="Campbell E.W."/>
            <person name="Caoile C."/>
            <person name="Challacombe J.F."/>
            <person name="Chasteen L.A."/>
            <person name="Chertkov O."/>
            <person name="Chi H.C."/>
            <person name="Christensen M."/>
            <person name="Clark L.M."/>
            <person name="Cohn J.D."/>
            <person name="Denys M."/>
            <person name="Detter J.C."/>
            <person name="Dickson M."/>
            <person name="Dimitrijevic-Bussod M."/>
            <person name="Escobar J."/>
            <person name="Fawcett J.J."/>
            <person name="Flowers D."/>
            <person name="Fotopulos D."/>
            <person name="Glavina T."/>
            <person name="Gomez M."/>
            <person name="Gonzales E."/>
            <person name="Goodstein D."/>
            <person name="Goodwin L.A."/>
            <person name="Grady D.L."/>
            <person name="Grigoriev I."/>
            <person name="Groza M."/>
            <person name="Hammon N."/>
            <person name="Hawkins T."/>
            <person name="Haydu L."/>
            <person name="Hildebrand C.E."/>
            <person name="Huang W."/>
            <person name="Israni S."/>
            <person name="Jett J."/>
            <person name="Jewett P.B."/>
            <person name="Kadner K."/>
            <person name="Kimball H."/>
            <person name="Kobayashi A."/>
            <person name="Krawczyk M.-C."/>
            <person name="Leyba T."/>
            <person name="Longmire J.L."/>
            <person name="Lopez F."/>
            <person name="Lou Y."/>
            <person name="Lowry S."/>
            <person name="Ludeman T."/>
            <person name="Manohar C.F."/>
            <person name="Mark G.A."/>
            <person name="McMurray K.L."/>
            <person name="Meincke L.J."/>
            <person name="Morgan J."/>
            <person name="Moyzis R.K."/>
            <person name="Mundt M.O."/>
            <person name="Munk A.C."/>
            <person name="Nandkeshwar R.D."/>
            <person name="Pitluck S."/>
            <person name="Pollard M."/>
            <person name="Predki P."/>
            <person name="Parson-Quintana B."/>
            <person name="Ramirez L."/>
            <person name="Rash S."/>
            <person name="Retterer J."/>
            <person name="Ricke D.O."/>
            <person name="Robinson D.L."/>
            <person name="Rodriguez A."/>
            <person name="Salamov A."/>
            <person name="Saunders E.H."/>
            <person name="Scott D."/>
            <person name="Shough T."/>
            <person name="Stallings R.L."/>
            <person name="Stalvey M."/>
            <person name="Sutherland R.D."/>
            <person name="Tapia R."/>
            <person name="Tesmer J.G."/>
            <person name="Thayer N."/>
            <person name="Thompson L.S."/>
            <person name="Tice H."/>
            <person name="Torney D.C."/>
            <person name="Tran-Gyamfi M."/>
            <person name="Tsai M."/>
            <person name="Ulanovsky L.E."/>
            <person name="Ustaszewska A."/>
            <person name="Vo N."/>
            <person name="White P.S."/>
            <person name="Williams A.L."/>
            <person name="Wills P.L."/>
            <person name="Wu J.-R."/>
            <person name="Wu K."/>
            <person name="Yang J."/>
            <person name="DeJong P."/>
            <person name="Bruce D."/>
            <person name="Doggett N.A."/>
            <person name="Deaven L."/>
            <person name="Schmutz J."/>
            <person name="Grimwood J."/>
            <person name="Richardson P."/>
            <person name="Rokhsar D.S."/>
            <person name="Eichler E.E."/>
            <person name="Gilna P."/>
            <person name="Lucas S.M."/>
            <person name="Myers R.M."/>
            <person name="Rubin E.M."/>
            <person name="Pennacchio L.A."/>
        </authorList>
    </citation>
    <scope>NUCLEOTIDE SEQUENCE [LARGE SCALE GENOMIC DNA]</scope>
</reference>
<reference key="4">
    <citation type="journal article" date="2004" name="Genome Res.">
        <title>The status, quality, and expansion of the NIH full-length cDNA project: the Mammalian Gene Collection (MGC).</title>
        <authorList>
            <consortium name="The MGC Project Team"/>
        </authorList>
    </citation>
    <scope>NUCLEOTIDE SEQUENCE [LARGE SCALE MRNA] (ISOFORMS 1 AND 2)</scope>
    <source>
        <tissue>Brain</tissue>
        <tissue>Uterus</tissue>
    </source>
</reference>
<reference key="5">
    <citation type="journal article" date="2007" name="BMC Genomics">
        <title>The full-ORF clone resource of the German cDNA consortium.</title>
        <authorList>
            <person name="Bechtel S."/>
            <person name="Rosenfelder H."/>
            <person name="Duda A."/>
            <person name="Schmidt C.P."/>
            <person name="Ernst U."/>
            <person name="Wellenreuther R."/>
            <person name="Mehrle A."/>
            <person name="Schuster C."/>
            <person name="Bahr A."/>
            <person name="Bloecker H."/>
            <person name="Heubner D."/>
            <person name="Hoerlein A."/>
            <person name="Michel G."/>
            <person name="Wedler H."/>
            <person name="Koehrer K."/>
            <person name="Ottenwaelder B."/>
            <person name="Poustka A."/>
            <person name="Wiemann S."/>
            <person name="Schupp I."/>
        </authorList>
    </citation>
    <scope>NUCLEOTIDE SEQUENCE [LARGE SCALE MRNA] OF 138-852 (ISOFORM 1)</scope>
    <source>
        <tissue>Melanoma</tissue>
    </source>
</reference>
<reference key="6">
    <citation type="journal article" date="2004" name="J. Biol. Chem.">
        <title>Proteomic analysis of rat liver peroxisome: presence of peroxisome-specific isozyme of Lon protease.</title>
        <authorList>
            <person name="Kikuchi M."/>
            <person name="Hatano N."/>
            <person name="Yokota S."/>
            <person name="Shimozawa N."/>
            <person name="Imanaka T."/>
            <person name="Taniguchi H."/>
        </authorList>
    </citation>
    <scope>SUBCELLULAR LOCATION</scope>
</reference>
<reference key="7">
    <citation type="journal article" date="2008" name="J. Biochem.">
        <title>Contribution of peroxisome-specific isoform of Lon protease in sorting PTS1 proteins to peroxisomes.</title>
        <authorList>
            <person name="Omi S."/>
            <person name="Nakata R."/>
            <person name="Okamura-Ikeda K."/>
            <person name="Konishi H."/>
            <person name="Taniguchi H."/>
        </authorList>
    </citation>
    <scope>INTERACTION WITH ABCD3; ACOX1 AND ACAA1</scope>
    <scope>SUBCELLULAR LOCATION</scope>
    <scope>TISSUE SPECIFICITY</scope>
    <scope>MUTAGENESIS OF SER-743 AND 850-SER--LEU-852</scope>
</reference>
<reference key="8">
    <citation type="journal article" date="2011" name="BMC Syst. Biol.">
        <title>Initial characterization of the human central proteome.</title>
        <authorList>
            <person name="Burkard T.R."/>
            <person name="Planyavsky M."/>
            <person name="Kaupe I."/>
            <person name="Breitwieser F.P."/>
            <person name="Buerckstuemmer T."/>
            <person name="Bennett K.L."/>
            <person name="Superti-Furga G."/>
            <person name="Colinge J."/>
        </authorList>
    </citation>
    <scope>IDENTIFICATION BY MASS SPECTROMETRY [LARGE SCALE ANALYSIS]</scope>
</reference>
<reference key="9">
    <citation type="journal article" date="2011" name="J. Biol. Chem.">
        <title>Two proteases, trypsin domain-containing 1 (Tysnd1) and peroxisomal lon protease (PsLon), cooperatively regulate fatty acid beta-oxidation in peroxisomal matrix.</title>
        <authorList>
            <person name="Okumoto K."/>
            <person name="Kametani Y."/>
            <person name="Fujiki Y."/>
        </authorList>
    </citation>
    <scope>FUNCTION</scope>
    <scope>SUBCELLULAR LOCATION</scope>
    <scope>INTERACTION WITH PEX5 AND TYSND1</scope>
    <scope>MUTAGENESIS OF SER-743</scope>
</reference>
<reference key="10">
    <citation type="journal article" date="2012" name="Proc. Natl. Acad. Sci. U.S.A.">
        <title>N-terminal acetylome analyses and functional insights of the N-terminal acetyltransferase NatB.</title>
        <authorList>
            <person name="Van Damme P."/>
            <person name="Lasa M."/>
            <person name="Polevoda B."/>
            <person name="Gazquez C."/>
            <person name="Elosegui-Artola A."/>
            <person name="Kim D.S."/>
            <person name="De Juan-Pardo E."/>
            <person name="Demeyer K."/>
            <person name="Hole K."/>
            <person name="Larrea E."/>
            <person name="Timmerman E."/>
            <person name="Prieto J."/>
            <person name="Arnesen T."/>
            <person name="Sherman F."/>
            <person name="Gevaert K."/>
            <person name="Aldabe R."/>
        </authorList>
    </citation>
    <scope>ACETYLATION [LARGE SCALE ANALYSIS] AT SER-2</scope>
    <scope>CLEAVAGE OF INITIATOR METHIONINE [LARGE SCALE ANALYSIS]</scope>
    <scope>IDENTIFICATION BY MASS SPECTROMETRY [LARGE SCALE ANALYSIS]</scope>
</reference>
<dbReference type="EC" id="3.4.21.53" evidence="1"/>
<dbReference type="EMBL" id="AJ548761">
    <property type="protein sequence ID" value="CAD68987.1"/>
    <property type="molecule type" value="mRNA"/>
</dbReference>
<dbReference type="EMBL" id="AK027666">
    <property type="protein sequence ID" value="BAB55278.1"/>
    <property type="status" value="ALT_INIT"/>
    <property type="molecule type" value="mRNA"/>
</dbReference>
<dbReference type="EMBL" id="AK074775">
    <property type="protein sequence ID" value="BAC11201.1"/>
    <property type="molecule type" value="mRNA"/>
</dbReference>
<dbReference type="EMBL" id="AC007600">
    <property type="status" value="NOT_ANNOTATED_CDS"/>
    <property type="molecule type" value="Genomic_DNA"/>
</dbReference>
<dbReference type="EMBL" id="AC023818">
    <property type="status" value="NOT_ANNOTATED_CDS"/>
    <property type="molecule type" value="Genomic_DNA"/>
</dbReference>
<dbReference type="EMBL" id="BC093910">
    <property type="protein sequence ID" value="AAH93910.1"/>
    <property type="molecule type" value="mRNA"/>
</dbReference>
<dbReference type="EMBL" id="BC093912">
    <property type="protein sequence ID" value="AAH93912.1"/>
    <property type="molecule type" value="mRNA"/>
</dbReference>
<dbReference type="EMBL" id="BC110434">
    <property type="protein sequence ID" value="AAI10435.1"/>
    <property type="molecule type" value="mRNA"/>
</dbReference>
<dbReference type="EMBL" id="BC143246">
    <property type="protein sequence ID" value="AAI43247.1"/>
    <property type="molecule type" value="mRNA"/>
</dbReference>
<dbReference type="EMBL" id="AL834201">
    <property type="protein sequence ID" value="CAD38889.1"/>
    <property type="molecule type" value="mRNA"/>
</dbReference>
<dbReference type="CCDS" id="CCDS10734.1">
    <molecule id="Q86WA8-1"/>
</dbReference>
<dbReference type="CCDS" id="CCDS73880.1">
    <molecule id="Q86WA8-2"/>
</dbReference>
<dbReference type="RefSeq" id="NP_001287877.1">
    <molecule id="Q86WA8-2"/>
    <property type="nucleotide sequence ID" value="NM_001300948.3"/>
</dbReference>
<dbReference type="RefSeq" id="NP_113678.2">
    <molecule id="Q86WA8-1"/>
    <property type="nucleotide sequence ID" value="NM_031490.4"/>
</dbReference>
<dbReference type="SMR" id="Q86WA8"/>
<dbReference type="BioGRID" id="123755">
    <property type="interactions" value="62"/>
</dbReference>
<dbReference type="FunCoup" id="Q86WA8">
    <property type="interactions" value="1179"/>
</dbReference>
<dbReference type="IntAct" id="Q86WA8">
    <property type="interactions" value="44"/>
</dbReference>
<dbReference type="MINT" id="Q86WA8"/>
<dbReference type="STRING" id="9606.ENSP00000285737"/>
<dbReference type="MEROPS" id="S16.006"/>
<dbReference type="GlyGen" id="Q86WA8">
    <property type="glycosylation" value="1 site, 1 O-linked glycan (1 site)"/>
</dbReference>
<dbReference type="iPTMnet" id="Q86WA8"/>
<dbReference type="PhosphoSitePlus" id="Q86WA8"/>
<dbReference type="SwissPalm" id="Q86WA8"/>
<dbReference type="BioMuta" id="LONP2"/>
<dbReference type="DMDM" id="74727668"/>
<dbReference type="jPOST" id="Q86WA8"/>
<dbReference type="MassIVE" id="Q86WA8"/>
<dbReference type="PaxDb" id="9606-ENSP00000285737"/>
<dbReference type="PeptideAtlas" id="Q86WA8"/>
<dbReference type="ProteomicsDB" id="70138">
    <molecule id="Q86WA8-1"/>
</dbReference>
<dbReference type="ProteomicsDB" id="7182"/>
<dbReference type="Pumba" id="Q86WA8"/>
<dbReference type="Antibodypedia" id="1715">
    <property type="antibodies" value="131 antibodies from 27 providers"/>
</dbReference>
<dbReference type="DNASU" id="83752"/>
<dbReference type="Ensembl" id="ENST00000285737.9">
    <molecule id="Q86WA8-1"/>
    <property type="protein sequence ID" value="ENSP00000285737.4"/>
    <property type="gene ID" value="ENSG00000102910.14"/>
</dbReference>
<dbReference type="Ensembl" id="ENST00000535754.5">
    <molecule id="Q86WA8-2"/>
    <property type="protein sequence ID" value="ENSP00000445426.1"/>
    <property type="gene ID" value="ENSG00000102910.14"/>
</dbReference>
<dbReference type="GeneID" id="83752"/>
<dbReference type="KEGG" id="hsa:83752"/>
<dbReference type="MANE-Select" id="ENST00000285737.9">
    <property type="protein sequence ID" value="ENSP00000285737.4"/>
    <property type="RefSeq nucleotide sequence ID" value="NM_031490.5"/>
    <property type="RefSeq protein sequence ID" value="NP_113678.2"/>
</dbReference>
<dbReference type="UCSC" id="uc002efi.2">
    <molecule id="Q86WA8-1"/>
    <property type="organism name" value="human"/>
</dbReference>
<dbReference type="AGR" id="HGNC:20598"/>
<dbReference type="CTD" id="83752"/>
<dbReference type="DisGeNET" id="83752"/>
<dbReference type="GeneCards" id="LONP2"/>
<dbReference type="HGNC" id="HGNC:20598">
    <property type="gene designation" value="LONP2"/>
</dbReference>
<dbReference type="HPA" id="ENSG00000102910">
    <property type="expression patterns" value="Low tissue specificity"/>
</dbReference>
<dbReference type="MalaCards" id="LONP2"/>
<dbReference type="MIM" id="617774">
    <property type="type" value="gene"/>
</dbReference>
<dbReference type="neXtProt" id="NX_Q86WA8"/>
<dbReference type="OpenTargets" id="ENSG00000102910"/>
<dbReference type="PharmGKB" id="PA162394186"/>
<dbReference type="VEuPathDB" id="HostDB:ENSG00000102910"/>
<dbReference type="eggNOG" id="KOG2004">
    <property type="taxonomic scope" value="Eukaryota"/>
</dbReference>
<dbReference type="GeneTree" id="ENSGT00530000063553"/>
<dbReference type="HOGENOM" id="CLU_004109_4_2_1"/>
<dbReference type="InParanoid" id="Q86WA8"/>
<dbReference type="OMA" id="EYFLHQQ"/>
<dbReference type="OrthoDB" id="2411602at2759"/>
<dbReference type="PAN-GO" id="Q86WA8">
    <property type="GO annotations" value="3 GO annotations based on evolutionary models"/>
</dbReference>
<dbReference type="PhylomeDB" id="Q86WA8"/>
<dbReference type="TreeFam" id="TF317215"/>
<dbReference type="PathwayCommons" id="Q86WA8"/>
<dbReference type="Reactome" id="R-HSA-390471">
    <property type="pathway name" value="Association of TriC/CCT with target proteins during biosynthesis"/>
</dbReference>
<dbReference type="Reactome" id="R-HSA-9033241">
    <property type="pathway name" value="Peroxisomal protein import"/>
</dbReference>
<dbReference type="SignaLink" id="Q86WA8"/>
<dbReference type="SIGNOR" id="Q86WA8"/>
<dbReference type="BioGRID-ORCS" id="83752">
    <property type="hits" value="15 hits in 1163 CRISPR screens"/>
</dbReference>
<dbReference type="ChiTaRS" id="LONP2">
    <property type="organism name" value="human"/>
</dbReference>
<dbReference type="GenomeRNAi" id="83752"/>
<dbReference type="Pharos" id="Q86WA8">
    <property type="development level" value="Tbio"/>
</dbReference>
<dbReference type="PRO" id="PR:Q86WA8"/>
<dbReference type="Proteomes" id="UP000005640">
    <property type="component" value="Chromosome 16"/>
</dbReference>
<dbReference type="RNAct" id="Q86WA8">
    <property type="molecule type" value="protein"/>
</dbReference>
<dbReference type="Bgee" id="ENSG00000102910">
    <property type="expression patterns" value="Expressed in right uterine tube and 203 other cell types or tissues"/>
</dbReference>
<dbReference type="ExpressionAtlas" id="Q86WA8">
    <property type="expression patterns" value="baseline and differential"/>
</dbReference>
<dbReference type="GO" id="GO:0005829">
    <property type="term" value="C:cytosol"/>
    <property type="evidence" value="ECO:0000304"/>
    <property type="project" value="Reactome"/>
</dbReference>
<dbReference type="GO" id="GO:0016020">
    <property type="term" value="C:membrane"/>
    <property type="evidence" value="ECO:0007005"/>
    <property type="project" value="UniProtKB"/>
</dbReference>
<dbReference type="GO" id="GO:0005634">
    <property type="term" value="C:nucleus"/>
    <property type="evidence" value="ECO:0007669"/>
    <property type="project" value="Ensembl"/>
</dbReference>
<dbReference type="GO" id="GO:0005782">
    <property type="term" value="C:peroxisomal matrix"/>
    <property type="evidence" value="ECO:0000318"/>
    <property type="project" value="GO_Central"/>
</dbReference>
<dbReference type="GO" id="GO:0005777">
    <property type="term" value="C:peroxisome"/>
    <property type="evidence" value="ECO:0000314"/>
    <property type="project" value="UniProtKB"/>
</dbReference>
<dbReference type="GO" id="GO:0005524">
    <property type="term" value="F:ATP binding"/>
    <property type="evidence" value="ECO:0007669"/>
    <property type="project" value="UniProtKB-UniRule"/>
</dbReference>
<dbReference type="GO" id="GO:0016887">
    <property type="term" value="F:ATP hydrolysis activity"/>
    <property type="evidence" value="ECO:0007669"/>
    <property type="project" value="UniProtKB-UniRule"/>
</dbReference>
<dbReference type="GO" id="GO:0004176">
    <property type="term" value="F:ATP-dependent peptidase activity"/>
    <property type="evidence" value="ECO:0007669"/>
    <property type="project" value="UniProtKB-UniRule"/>
</dbReference>
<dbReference type="GO" id="GO:0019899">
    <property type="term" value="F:enzyme binding"/>
    <property type="evidence" value="ECO:0000353"/>
    <property type="project" value="UniProtKB"/>
</dbReference>
<dbReference type="GO" id="GO:0008233">
    <property type="term" value="F:peptidase activity"/>
    <property type="evidence" value="ECO:0000314"/>
    <property type="project" value="UniProtKB"/>
</dbReference>
<dbReference type="GO" id="GO:0002020">
    <property type="term" value="F:protease binding"/>
    <property type="evidence" value="ECO:0000353"/>
    <property type="project" value="UniProtKB"/>
</dbReference>
<dbReference type="GO" id="GO:0004252">
    <property type="term" value="F:serine-type endopeptidase activity"/>
    <property type="evidence" value="ECO:0007669"/>
    <property type="project" value="UniProtKB-UniRule"/>
</dbReference>
<dbReference type="GO" id="GO:0007031">
    <property type="term" value="P:peroxisome organization"/>
    <property type="evidence" value="ECO:0000303"/>
    <property type="project" value="UniProtKB"/>
</dbReference>
<dbReference type="GO" id="GO:0016558">
    <property type="term" value="P:protein import into peroxisome matrix"/>
    <property type="evidence" value="ECO:0007669"/>
    <property type="project" value="UniProtKB-UniRule"/>
</dbReference>
<dbReference type="GO" id="GO:0016485">
    <property type="term" value="P:protein processing"/>
    <property type="evidence" value="ECO:0000315"/>
    <property type="project" value="UniProtKB"/>
</dbReference>
<dbReference type="GO" id="GO:0006515">
    <property type="term" value="P:protein quality control for misfolded or incompletely synthesized proteins"/>
    <property type="evidence" value="ECO:0007669"/>
    <property type="project" value="UniProtKB-UniRule"/>
</dbReference>
<dbReference type="GO" id="GO:0006625">
    <property type="term" value="P:protein targeting to peroxisome"/>
    <property type="evidence" value="ECO:0000315"/>
    <property type="project" value="UniProtKB"/>
</dbReference>
<dbReference type="GO" id="GO:0031998">
    <property type="term" value="P:regulation of fatty acid beta-oxidation"/>
    <property type="evidence" value="ECO:0000315"/>
    <property type="project" value="UniProtKB"/>
</dbReference>
<dbReference type="CDD" id="cd19500">
    <property type="entry name" value="RecA-like_Lon"/>
    <property type="match status" value="1"/>
</dbReference>
<dbReference type="FunFam" id="1.10.8.60:FF:000046">
    <property type="entry name" value="Lon protease homolog 2, peroxisomal"/>
    <property type="match status" value="1"/>
</dbReference>
<dbReference type="FunFam" id="1.20.5.5270:FF:000003">
    <property type="entry name" value="Lon protease homolog 2, peroxisomal"/>
    <property type="match status" value="1"/>
</dbReference>
<dbReference type="FunFam" id="2.30.130.40:FF:000003">
    <property type="entry name" value="Lon protease homolog 2, peroxisomal"/>
    <property type="match status" value="1"/>
</dbReference>
<dbReference type="FunFam" id="3.30.230.10:FF:000019">
    <property type="entry name" value="Lon protease homolog 2, peroxisomal"/>
    <property type="match status" value="1"/>
</dbReference>
<dbReference type="FunFam" id="3.40.50.300:FF:000382">
    <property type="entry name" value="Lon protease homolog 2, peroxisomal"/>
    <property type="match status" value="1"/>
</dbReference>
<dbReference type="Gene3D" id="1.10.8.60">
    <property type="match status" value="1"/>
</dbReference>
<dbReference type="Gene3D" id="1.20.5.5270">
    <property type="match status" value="1"/>
</dbReference>
<dbReference type="Gene3D" id="3.30.230.10">
    <property type="match status" value="1"/>
</dbReference>
<dbReference type="Gene3D" id="2.30.130.40">
    <property type="entry name" value="LON domain-like"/>
    <property type="match status" value="1"/>
</dbReference>
<dbReference type="Gene3D" id="3.40.50.300">
    <property type="entry name" value="P-loop containing nucleotide triphosphate hydrolases"/>
    <property type="match status" value="1"/>
</dbReference>
<dbReference type="HAMAP" id="MF_03121">
    <property type="entry name" value="lonp2_euk"/>
    <property type="match status" value="1"/>
</dbReference>
<dbReference type="InterPro" id="IPR003593">
    <property type="entry name" value="AAA+_ATPase"/>
</dbReference>
<dbReference type="InterPro" id="IPR003959">
    <property type="entry name" value="ATPase_AAA_core"/>
</dbReference>
<dbReference type="InterPro" id="IPR004815">
    <property type="entry name" value="Lon_bac/euk-typ"/>
</dbReference>
<dbReference type="InterPro" id="IPR054594">
    <property type="entry name" value="Lon_lid"/>
</dbReference>
<dbReference type="InterPro" id="IPR008269">
    <property type="entry name" value="Lon_proteolytic"/>
</dbReference>
<dbReference type="InterPro" id="IPR027065">
    <property type="entry name" value="Lon_Prtase"/>
</dbReference>
<dbReference type="InterPro" id="IPR003111">
    <property type="entry name" value="Lon_prtase_N"/>
</dbReference>
<dbReference type="InterPro" id="IPR046336">
    <property type="entry name" value="Lon_prtase_N_sf"/>
</dbReference>
<dbReference type="InterPro" id="IPR027501">
    <property type="entry name" value="Lonp2_euk"/>
</dbReference>
<dbReference type="InterPro" id="IPR027417">
    <property type="entry name" value="P-loop_NTPase"/>
</dbReference>
<dbReference type="InterPro" id="IPR008268">
    <property type="entry name" value="Peptidase_S16_AS"/>
</dbReference>
<dbReference type="InterPro" id="IPR015947">
    <property type="entry name" value="PUA-like_sf"/>
</dbReference>
<dbReference type="InterPro" id="IPR020568">
    <property type="entry name" value="Ribosomal_Su5_D2-typ_SF"/>
</dbReference>
<dbReference type="InterPro" id="IPR014721">
    <property type="entry name" value="Ribsml_uS5_D2-typ_fold_subgr"/>
</dbReference>
<dbReference type="NCBIfam" id="TIGR00763">
    <property type="entry name" value="lon"/>
    <property type="match status" value="1"/>
</dbReference>
<dbReference type="PANTHER" id="PTHR10046">
    <property type="entry name" value="ATP DEPENDENT LON PROTEASE FAMILY MEMBER"/>
    <property type="match status" value="1"/>
</dbReference>
<dbReference type="Pfam" id="PF00004">
    <property type="entry name" value="AAA"/>
    <property type="match status" value="1"/>
</dbReference>
<dbReference type="Pfam" id="PF05362">
    <property type="entry name" value="Lon_C"/>
    <property type="match status" value="1"/>
</dbReference>
<dbReference type="Pfam" id="PF22667">
    <property type="entry name" value="Lon_lid"/>
    <property type="match status" value="1"/>
</dbReference>
<dbReference type="Pfam" id="PF02190">
    <property type="entry name" value="LON_substr_bdg"/>
    <property type="match status" value="1"/>
</dbReference>
<dbReference type="PIRSF" id="PIRSF001174">
    <property type="entry name" value="Lon_proteas"/>
    <property type="match status" value="1"/>
</dbReference>
<dbReference type="PRINTS" id="PR00830">
    <property type="entry name" value="ENDOLAPTASE"/>
</dbReference>
<dbReference type="SMART" id="SM00382">
    <property type="entry name" value="AAA"/>
    <property type="match status" value="1"/>
</dbReference>
<dbReference type="SMART" id="SM00464">
    <property type="entry name" value="LON"/>
    <property type="match status" value="1"/>
</dbReference>
<dbReference type="SUPFAM" id="SSF52540">
    <property type="entry name" value="P-loop containing nucleoside triphosphate hydrolases"/>
    <property type="match status" value="1"/>
</dbReference>
<dbReference type="SUPFAM" id="SSF88697">
    <property type="entry name" value="PUA domain-like"/>
    <property type="match status" value="1"/>
</dbReference>
<dbReference type="SUPFAM" id="SSF54211">
    <property type="entry name" value="Ribosomal protein S5 domain 2-like"/>
    <property type="match status" value="1"/>
</dbReference>
<dbReference type="PROSITE" id="PS51787">
    <property type="entry name" value="LON_N"/>
    <property type="match status" value="1"/>
</dbReference>
<dbReference type="PROSITE" id="PS51786">
    <property type="entry name" value="LON_PROTEOLYTIC"/>
    <property type="match status" value="1"/>
</dbReference>
<dbReference type="PROSITE" id="PS01046">
    <property type="entry name" value="LON_SER"/>
    <property type="match status" value="1"/>
</dbReference>
<evidence type="ECO:0000255" key="1">
    <source>
        <dbReference type="HAMAP-Rule" id="MF_03121"/>
    </source>
</evidence>
<evidence type="ECO:0000255" key="2">
    <source>
        <dbReference type="PROSITE-ProRule" id="PRU01122"/>
    </source>
</evidence>
<evidence type="ECO:0000255" key="3">
    <source>
        <dbReference type="PROSITE-ProRule" id="PRU01123"/>
    </source>
</evidence>
<evidence type="ECO:0000269" key="4">
    <source>
    </source>
</evidence>
<evidence type="ECO:0000269" key="5">
    <source>
    </source>
</evidence>
<evidence type="ECO:0000269" key="6">
    <source>
    </source>
</evidence>
<evidence type="ECO:0000303" key="7">
    <source>
    </source>
</evidence>
<evidence type="ECO:0000303" key="8">
    <source>
    </source>
</evidence>
<evidence type="ECO:0000305" key="9"/>
<evidence type="ECO:0007744" key="10">
    <source>
    </source>
</evidence>
<sequence>MSSVSPIQIPSRLPLLLTHEGVLLPGSTMRTSVDSARNLQLVRSRLLKGTSLQSTILGVIPNTPDPASDAQDLPPLHRIGTAALAVQVVGSNWPKPHYTLLITGLCRFQIVQVLKEKPYPIAEVEQLDRLEEFPNTCKMREELGELSEQFYKYAVQLVEMLDMSVPAVAKLRRLLDSLPREALPDILTSIIRTSNKEKLQILDAVSLEERFKMTIPLLVRQIEGLKLLQKTRKPKQDDDKRVIAIRPIRRITHISGTLEDEDEDEDNDDIVMLEKKIRTSSMPEQAHKVCVKEIKRLKKMPQSMPEYALTRNYLELMVELPWNKSTTDRLDIRAARILLDNDHYAMEKLKKRVLEYLAVRQLKNNLKGPILCFVGPPGVGKTSVGRSVAKTLGREFHRIALGGVCDQSDIRGHRRTYVGSMPGRIINGLKTVGVNNPVFLLDEVDKLGKSLQGDPAAALLEVLDPEQNHNFTDHYLNVAFDLSQVLFIATANTTATIPAALLDRMEIIQVPGYTQEEKIEIAHRHLIPKQLEQHGLTPQQIQIPQVTTLDIITRYTREAGVRSLDRKLGAICRAVAVKVAEGQHKEAKLDRSDVTEREGCREHILEDEKPESISDTTDLALPPEMPILIDFHALKDILGPPMYEMEVSQRLSQPGVAIGLAWTPLGGEIMFVEASRMDGEGQLTLTGQLGDVMKESAHLAISWLRSNAKKYQLTNAFGSFDLLDNTDIHLHFPAGAVTKDGPSAGVTIVTCLASLFSGRLVRSDVAMTGEITLRGLVLPVGGIKDKVLAAHRAGLKQVIIPRRNEKDLEGIPGNVRQDLSFVTASCLDEVLNAAFDGGFTVKTRPGLLNSKL</sequence>
<name>LONP2_HUMAN</name>
<organism>
    <name type="scientific">Homo sapiens</name>
    <name type="common">Human</name>
    <dbReference type="NCBI Taxonomy" id="9606"/>
    <lineage>
        <taxon>Eukaryota</taxon>
        <taxon>Metazoa</taxon>
        <taxon>Chordata</taxon>
        <taxon>Craniata</taxon>
        <taxon>Vertebrata</taxon>
        <taxon>Euteleostomi</taxon>
        <taxon>Mammalia</taxon>
        <taxon>Eutheria</taxon>
        <taxon>Euarchontoglires</taxon>
        <taxon>Primates</taxon>
        <taxon>Haplorrhini</taxon>
        <taxon>Catarrhini</taxon>
        <taxon>Hominidae</taxon>
        <taxon>Homo</taxon>
    </lineage>
</organism>
<proteinExistence type="evidence at protein level"/>
<accession>Q86WA8</accession>
<accession>B7ZKL7</accession>
<accession>Q0D2H6</accession>
<accession>Q8N3B9</accession>
<accession>Q8NCE9</accession>
<accession>Q96K43</accession>
<protein>
    <recommendedName>
        <fullName evidence="1">Lon protease homolog 2, peroxisomal</fullName>
        <ecNumber evidence="1">3.4.21.53</ecNumber>
    </recommendedName>
    <alternativeName>
        <fullName evidence="1">Lon protease-like protein 2</fullName>
        <shortName evidence="1">Lon protease 2</shortName>
    </alternativeName>
    <alternativeName>
        <fullName evidence="1">Peroxisomal Lon protease</fullName>
        <shortName evidence="8">pLon</shortName>
    </alternativeName>
</protein>
<feature type="initiator methionine" description="Removed" evidence="10">
    <location>
        <position position="1"/>
    </location>
</feature>
<feature type="chain" id="PRO_0000287640" description="Lon protease homolog 2, peroxisomal">
    <location>
        <begin position="2"/>
        <end position="852"/>
    </location>
</feature>
<feature type="domain" description="Lon N-terminal" evidence="3">
    <location>
        <begin position="13"/>
        <end position="222"/>
    </location>
</feature>
<feature type="domain" description="Lon proteolytic" evidence="2">
    <location>
        <begin position="651"/>
        <end position="837"/>
    </location>
</feature>
<feature type="short sequence motif" description="Microbody targeting signal" evidence="1">
    <location>
        <begin position="850"/>
        <end position="852"/>
    </location>
</feature>
<feature type="active site" evidence="1">
    <location>
        <position position="743"/>
    </location>
</feature>
<feature type="active site" evidence="1">
    <location>
        <position position="786"/>
    </location>
</feature>
<feature type="binding site" evidence="1">
    <location>
        <begin position="375"/>
        <end position="382"/>
    </location>
    <ligand>
        <name>ATP</name>
        <dbReference type="ChEBI" id="CHEBI:30616"/>
    </ligand>
</feature>
<feature type="modified residue" description="N-acetylserine" evidence="10">
    <location>
        <position position="2"/>
    </location>
</feature>
<feature type="splice variant" id="VSP_056190" description="In isoform 2." evidence="7">
    <location>
        <begin position="156"/>
        <end position="199"/>
    </location>
</feature>
<feature type="mutagenesis site" description="Reduces degradation of self-processed forms of TYSND1. Loss of ACOX1-processing." evidence="5 6">
    <original>S</original>
    <variation>A</variation>
    <location>
        <position position="743"/>
    </location>
</feature>
<feature type="mutagenesis site" description="Loss of peroxisomal localization." evidence="5">
    <location>
        <begin position="850"/>
        <end position="852"/>
    </location>
</feature>
<feature type="sequence conflict" description="In Ref. 4; AAI10435." evidence="9" ref="4">
    <original>S</original>
    <variation>A</variation>
    <location>
        <position position="255"/>
    </location>
</feature>
<feature type="sequence conflict" description="In Ref. 2; BAC11201." evidence="9" ref="2">
    <original>L</original>
    <variation>F</variation>
    <location>
        <position position="628"/>
    </location>
</feature>